<sequence length="911" mass="104907">MLTPFKLFTKIFKNRNDRVLLRMKKVVDMINYMEKDIQKLNDSQLASKTNEFRKSIESGVKNLENLLPQAFAVVRESIKRIFNIRLFDVQLLGGIVLNSRCIAEMKTGEGKTLTATLPAYLNALSGQGVHIVTVNNYLAHRDAINNKPLFEFLGLTVGINLPGLSASMKRAAYTADITYGTNNEYGFDYLRDNMVFVPEERVQRGLHYALIDEVDSILIDEARTPLVISGPSDDTSLLYSKINELVFSIIQKNKRNIDNLQKEEYFTVDEKSRQVILTENGLVLIEQLLIKSGIMNQGESLYSSDNIILMHHVNAAFRAHILFTCEVDYLVKNGEILIIDEHTGRVMPGRRWSDGLHQAIEAKEHVTIQNENQTLASITFQNYFRLYEKLSGMTGTANTEAFEFQSIYKLDTIVIPTNRPMIRNDFPDIIYMTEHEKIEAIINDIKDCVKRNQPVLVGTISIEKSEIISHALSQIGIMHKVLNAKFHAAEADIIAQAGYPGAVTIATNMAGRGTDIILGGNWRAEITALHKANTCKILKIKSDWKKRHHAVLKSGGLHVIGTERHESRRIDNQLRGRSGRQGDIGSSRFYLSMEDSLIRIFASNRLVNMMKKLGMKSGESIEHPWITKAIAHAQKKVENRNFDIRKQLLEYDDVANDQRRVIYEQRDKLLNISDISDIIRNIRCDVVEKLFNIYIPLEIIENKRDVMKLEECLEKDFCLELPLLKWIEVEPRLYEEKEILRQRILENMTQKYEHTRKIIGIDIMCSFEKEIMLRTFDVLWKEHLASMDYLRQGIHLRGYAQKDPKQEYKRESFSMFTKMLDHLKYEVISEVSKLVIELFNKKESILNSTNKYNDFQSINTQVMNTKLLSIDHFLNQHTLTKNKTVSRNDACPCGSNKKFKECHGKIVNKRH</sequence>
<comment type="function">
    <text evidence="1">Part of the Sec protein translocase complex. Interacts with the SecYEG preprotein conducting channel. Has a central role in coupling the hydrolysis of ATP to the transfer of proteins into and across the cell membrane, serving both as a receptor for the preprotein-SecB complex and as an ATP-driven molecular motor driving the stepwise translocation of polypeptide chains across the membrane.</text>
</comment>
<comment type="catalytic activity">
    <reaction evidence="1">
        <text>ATP + H2O + cellular proteinSide 1 = ADP + phosphate + cellular proteinSide 2.</text>
        <dbReference type="EC" id="7.4.2.8"/>
    </reaction>
</comment>
<comment type="cofactor">
    <cofactor evidence="1">
        <name>Zn(2+)</name>
        <dbReference type="ChEBI" id="CHEBI:29105"/>
    </cofactor>
    <text evidence="1">May bind 1 zinc ion per subunit.</text>
</comment>
<comment type="subunit">
    <text evidence="1">Monomer and homodimer. Part of the essential Sec protein translocation apparatus which comprises SecA, SecYEG and auxiliary proteins SecDF-YajC and YidC.</text>
</comment>
<comment type="subcellular location">
    <subcellularLocation>
        <location evidence="1">Cell inner membrane</location>
        <topology evidence="1">Peripheral membrane protein</topology>
        <orientation evidence="1">Cytoplasmic side</orientation>
    </subcellularLocation>
    <subcellularLocation>
        <location evidence="1">Cytoplasm</location>
    </subcellularLocation>
    <text evidence="1">Distribution is 50-50.</text>
</comment>
<comment type="induction">
    <text evidence="1">Repressed under conditions of excess protein secretion capacity and derepressed when protein secretion becomes limiting. This is regulated by SecM.</text>
</comment>
<comment type="similarity">
    <text evidence="1">Belongs to the SecA family.</text>
</comment>
<gene>
    <name evidence="1" type="primary">secA</name>
    <name type="ordered locus">BPEN_152</name>
</gene>
<organism>
    <name type="scientific">Blochmanniella pennsylvanica (strain BPEN)</name>
    <dbReference type="NCBI Taxonomy" id="291272"/>
    <lineage>
        <taxon>Bacteria</taxon>
        <taxon>Pseudomonadati</taxon>
        <taxon>Pseudomonadota</taxon>
        <taxon>Gammaproteobacteria</taxon>
        <taxon>Enterobacterales</taxon>
        <taxon>Enterobacteriaceae</taxon>
        <taxon>ant endosymbionts</taxon>
        <taxon>Candidatus Blochmanniella</taxon>
    </lineage>
</organism>
<protein>
    <recommendedName>
        <fullName evidence="1">Protein translocase subunit SecA</fullName>
        <ecNumber evidence="1">7.4.2.8</ecNumber>
    </recommendedName>
</protein>
<keyword id="KW-0067">ATP-binding</keyword>
<keyword id="KW-0997">Cell inner membrane</keyword>
<keyword id="KW-1003">Cell membrane</keyword>
<keyword id="KW-0963">Cytoplasm</keyword>
<keyword id="KW-0472">Membrane</keyword>
<keyword id="KW-0479">Metal-binding</keyword>
<keyword id="KW-0547">Nucleotide-binding</keyword>
<keyword id="KW-0653">Protein transport</keyword>
<keyword id="KW-1185">Reference proteome</keyword>
<keyword id="KW-1278">Translocase</keyword>
<keyword id="KW-0811">Translocation</keyword>
<keyword id="KW-0813">Transport</keyword>
<keyword id="KW-0862">Zinc</keyword>
<evidence type="ECO:0000255" key="1">
    <source>
        <dbReference type="HAMAP-Rule" id="MF_01382"/>
    </source>
</evidence>
<name>SECA_BLOPB</name>
<accession>Q493P5</accession>
<feature type="chain" id="PRO_0000320738" description="Protein translocase subunit SecA">
    <location>
        <begin position="1"/>
        <end position="911"/>
    </location>
</feature>
<feature type="binding site" evidence="1">
    <location>
        <position position="90"/>
    </location>
    <ligand>
        <name>ATP</name>
        <dbReference type="ChEBI" id="CHEBI:30616"/>
    </ligand>
</feature>
<feature type="binding site" evidence="1">
    <location>
        <begin position="108"/>
        <end position="112"/>
    </location>
    <ligand>
        <name>ATP</name>
        <dbReference type="ChEBI" id="CHEBI:30616"/>
    </ligand>
</feature>
<feature type="binding site" evidence="1">
    <location>
        <position position="515"/>
    </location>
    <ligand>
        <name>ATP</name>
        <dbReference type="ChEBI" id="CHEBI:30616"/>
    </ligand>
</feature>
<feature type="binding site" evidence="1">
    <location>
        <position position="891"/>
    </location>
    <ligand>
        <name>Zn(2+)</name>
        <dbReference type="ChEBI" id="CHEBI:29105"/>
    </ligand>
</feature>
<feature type="binding site" evidence="1">
    <location>
        <position position="893"/>
    </location>
    <ligand>
        <name>Zn(2+)</name>
        <dbReference type="ChEBI" id="CHEBI:29105"/>
    </ligand>
</feature>
<feature type="binding site" evidence="1">
    <location>
        <position position="902"/>
    </location>
    <ligand>
        <name>Zn(2+)</name>
        <dbReference type="ChEBI" id="CHEBI:29105"/>
    </ligand>
</feature>
<feature type="binding site" evidence="1">
    <location>
        <position position="903"/>
    </location>
    <ligand>
        <name>Zn(2+)</name>
        <dbReference type="ChEBI" id="CHEBI:29105"/>
    </ligand>
</feature>
<dbReference type="EC" id="7.4.2.8" evidence="1"/>
<dbReference type="EMBL" id="CP000016">
    <property type="protein sequence ID" value="AAZ40792.1"/>
    <property type="molecule type" value="Genomic_DNA"/>
</dbReference>
<dbReference type="RefSeq" id="WP_011282699.1">
    <property type="nucleotide sequence ID" value="NC_007292.1"/>
</dbReference>
<dbReference type="SMR" id="Q493P5"/>
<dbReference type="STRING" id="291272.BPEN_152"/>
<dbReference type="KEGG" id="bpn:BPEN_152"/>
<dbReference type="eggNOG" id="COG0653">
    <property type="taxonomic scope" value="Bacteria"/>
</dbReference>
<dbReference type="HOGENOM" id="CLU_005314_3_0_6"/>
<dbReference type="OrthoDB" id="9805579at2"/>
<dbReference type="Proteomes" id="UP000007794">
    <property type="component" value="Chromosome"/>
</dbReference>
<dbReference type="GO" id="GO:0031522">
    <property type="term" value="C:cell envelope Sec protein transport complex"/>
    <property type="evidence" value="ECO:0007669"/>
    <property type="project" value="TreeGrafter"/>
</dbReference>
<dbReference type="GO" id="GO:0005829">
    <property type="term" value="C:cytosol"/>
    <property type="evidence" value="ECO:0007669"/>
    <property type="project" value="TreeGrafter"/>
</dbReference>
<dbReference type="GO" id="GO:0005886">
    <property type="term" value="C:plasma membrane"/>
    <property type="evidence" value="ECO:0007669"/>
    <property type="project" value="UniProtKB-SubCell"/>
</dbReference>
<dbReference type="GO" id="GO:0005524">
    <property type="term" value="F:ATP binding"/>
    <property type="evidence" value="ECO:0007669"/>
    <property type="project" value="UniProtKB-UniRule"/>
</dbReference>
<dbReference type="GO" id="GO:0046872">
    <property type="term" value="F:metal ion binding"/>
    <property type="evidence" value="ECO:0007669"/>
    <property type="project" value="UniProtKB-KW"/>
</dbReference>
<dbReference type="GO" id="GO:0008564">
    <property type="term" value="F:protein-exporting ATPase activity"/>
    <property type="evidence" value="ECO:0007669"/>
    <property type="project" value="UniProtKB-EC"/>
</dbReference>
<dbReference type="GO" id="GO:0065002">
    <property type="term" value="P:intracellular protein transmembrane transport"/>
    <property type="evidence" value="ECO:0007669"/>
    <property type="project" value="UniProtKB-UniRule"/>
</dbReference>
<dbReference type="GO" id="GO:0017038">
    <property type="term" value="P:protein import"/>
    <property type="evidence" value="ECO:0007669"/>
    <property type="project" value="InterPro"/>
</dbReference>
<dbReference type="GO" id="GO:0006605">
    <property type="term" value="P:protein targeting"/>
    <property type="evidence" value="ECO:0007669"/>
    <property type="project" value="UniProtKB-UniRule"/>
</dbReference>
<dbReference type="GO" id="GO:0043952">
    <property type="term" value="P:protein transport by the Sec complex"/>
    <property type="evidence" value="ECO:0007669"/>
    <property type="project" value="TreeGrafter"/>
</dbReference>
<dbReference type="CDD" id="cd17928">
    <property type="entry name" value="DEXDc_SecA"/>
    <property type="match status" value="1"/>
</dbReference>
<dbReference type="CDD" id="cd18803">
    <property type="entry name" value="SF2_C_secA"/>
    <property type="match status" value="1"/>
</dbReference>
<dbReference type="FunFam" id="3.40.50.300:FF:000113">
    <property type="entry name" value="Preprotein translocase subunit SecA"/>
    <property type="match status" value="1"/>
</dbReference>
<dbReference type="FunFam" id="3.90.1440.10:FF:000001">
    <property type="entry name" value="Preprotein translocase subunit SecA"/>
    <property type="match status" value="1"/>
</dbReference>
<dbReference type="FunFam" id="1.10.3060.10:FF:000003">
    <property type="entry name" value="Protein translocase subunit SecA"/>
    <property type="match status" value="1"/>
</dbReference>
<dbReference type="Gene3D" id="1.10.3060.10">
    <property type="entry name" value="Helical scaffold and wing domains of SecA"/>
    <property type="match status" value="1"/>
</dbReference>
<dbReference type="Gene3D" id="3.40.50.300">
    <property type="entry name" value="P-loop containing nucleotide triphosphate hydrolases"/>
    <property type="match status" value="2"/>
</dbReference>
<dbReference type="Gene3D" id="3.90.1440.10">
    <property type="entry name" value="SecA, preprotein cross-linking domain"/>
    <property type="match status" value="1"/>
</dbReference>
<dbReference type="HAMAP" id="MF_01382">
    <property type="entry name" value="SecA"/>
    <property type="match status" value="1"/>
</dbReference>
<dbReference type="InterPro" id="IPR014001">
    <property type="entry name" value="Helicase_ATP-bd"/>
</dbReference>
<dbReference type="InterPro" id="IPR027417">
    <property type="entry name" value="P-loop_NTPase"/>
</dbReference>
<dbReference type="InterPro" id="IPR004027">
    <property type="entry name" value="SEC_C_motif"/>
</dbReference>
<dbReference type="InterPro" id="IPR000185">
    <property type="entry name" value="SecA"/>
</dbReference>
<dbReference type="InterPro" id="IPR020937">
    <property type="entry name" value="SecA_CS"/>
</dbReference>
<dbReference type="InterPro" id="IPR011115">
    <property type="entry name" value="SecA_DEAD"/>
</dbReference>
<dbReference type="InterPro" id="IPR014018">
    <property type="entry name" value="SecA_motor_DEAD"/>
</dbReference>
<dbReference type="InterPro" id="IPR011130">
    <property type="entry name" value="SecA_preprotein_X-link_dom"/>
</dbReference>
<dbReference type="InterPro" id="IPR044722">
    <property type="entry name" value="SecA_SF2_C"/>
</dbReference>
<dbReference type="InterPro" id="IPR011116">
    <property type="entry name" value="SecA_Wing/Scaffold"/>
</dbReference>
<dbReference type="InterPro" id="IPR036266">
    <property type="entry name" value="SecA_Wing/Scaffold_sf"/>
</dbReference>
<dbReference type="InterPro" id="IPR036670">
    <property type="entry name" value="SecA_X-link_sf"/>
</dbReference>
<dbReference type="NCBIfam" id="NF009538">
    <property type="entry name" value="PRK12904.1"/>
    <property type="match status" value="1"/>
</dbReference>
<dbReference type="NCBIfam" id="TIGR00963">
    <property type="entry name" value="secA"/>
    <property type="match status" value="1"/>
</dbReference>
<dbReference type="PANTHER" id="PTHR30612:SF0">
    <property type="entry name" value="CHLOROPLAST PROTEIN-TRANSPORTING ATPASE"/>
    <property type="match status" value="1"/>
</dbReference>
<dbReference type="PANTHER" id="PTHR30612">
    <property type="entry name" value="SECA INNER MEMBRANE COMPONENT OF SEC PROTEIN SECRETION SYSTEM"/>
    <property type="match status" value="1"/>
</dbReference>
<dbReference type="Pfam" id="PF21090">
    <property type="entry name" value="P-loop_SecA"/>
    <property type="match status" value="1"/>
</dbReference>
<dbReference type="Pfam" id="PF02810">
    <property type="entry name" value="SEC-C"/>
    <property type="match status" value="1"/>
</dbReference>
<dbReference type="Pfam" id="PF07517">
    <property type="entry name" value="SecA_DEAD"/>
    <property type="match status" value="1"/>
</dbReference>
<dbReference type="Pfam" id="PF01043">
    <property type="entry name" value="SecA_PP_bind"/>
    <property type="match status" value="1"/>
</dbReference>
<dbReference type="Pfam" id="PF07516">
    <property type="entry name" value="SecA_SW"/>
    <property type="match status" value="1"/>
</dbReference>
<dbReference type="PRINTS" id="PR00906">
    <property type="entry name" value="SECA"/>
</dbReference>
<dbReference type="SMART" id="SM00957">
    <property type="entry name" value="SecA_DEAD"/>
    <property type="match status" value="1"/>
</dbReference>
<dbReference type="SMART" id="SM00958">
    <property type="entry name" value="SecA_PP_bind"/>
    <property type="match status" value="1"/>
</dbReference>
<dbReference type="SUPFAM" id="SSF81886">
    <property type="entry name" value="Helical scaffold and wing domains of SecA"/>
    <property type="match status" value="1"/>
</dbReference>
<dbReference type="SUPFAM" id="SSF52540">
    <property type="entry name" value="P-loop containing nucleoside triphosphate hydrolases"/>
    <property type="match status" value="2"/>
</dbReference>
<dbReference type="SUPFAM" id="SSF81767">
    <property type="entry name" value="Pre-protein crosslinking domain of SecA"/>
    <property type="match status" value="1"/>
</dbReference>
<dbReference type="PROSITE" id="PS01312">
    <property type="entry name" value="SECA"/>
    <property type="match status" value="1"/>
</dbReference>
<dbReference type="PROSITE" id="PS51196">
    <property type="entry name" value="SECA_MOTOR_DEAD"/>
    <property type="match status" value="1"/>
</dbReference>
<reference key="1">
    <citation type="journal article" date="2005" name="Genome Res.">
        <title>Genome sequence of Blochmannia pennsylvanicus indicates parallel evolutionary trends among bacterial mutualists of insects.</title>
        <authorList>
            <person name="Degnan P.H."/>
            <person name="Lazarus A.B."/>
            <person name="Wernegreen J.J."/>
        </authorList>
    </citation>
    <scope>NUCLEOTIDE SEQUENCE [LARGE SCALE GENOMIC DNA]</scope>
    <source>
        <strain>BPEN</strain>
    </source>
</reference>
<proteinExistence type="inferred from homology"/>